<name>Y2818_BORBU</name>
<protein>
    <recommendedName>
        <fullName>Uncharacterized protein BBD18</fullName>
    </recommendedName>
</protein>
<gene>
    <name type="ordered locus">BB_D18</name>
    <name type="ORF">CdsL</name>
</gene>
<sequence length="220" mass="25729">MQKEITINYNEYTIGGIKGTFFGNSQYEANYRAKINGFIIDFFKIPISLKKKYELNIKALSDPNFSSTNIAMNCINTFKLIVDIVNMQTGENYDYDTFITKTDTEKMLKYGTKIIAALARHFDEQNKTNFNESYYEWEKGWIDKKWINYEPTAEEIKEIQIMNQKLNPLKLKHRKKNLNNGQIRLLQAINKIEDQSQQQATKSNSKTKKLKGNHGEKTKI</sequence>
<keyword id="KW-0614">Plasmid</keyword>
<keyword id="KW-1185">Reference proteome</keyword>
<reference key="1">
    <citation type="journal article" date="1996" name="J. Bacteriol.">
        <title>The nucleotide sequence of a linear plasmid of Borrelia burgdorferi reveals similarities to those of circular plasmids of other prokaryotes.</title>
        <authorList>
            <person name="Barbour A.G."/>
            <person name="Carter C.J."/>
            <person name="Bundoc V."/>
            <person name="Hinnebusch J."/>
        </authorList>
    </citation>
    <scope>NUCLEOTIDE SEQUENCE [GENOMIC DNA]</scope>
    <source>
        <strain>ATCC 35210 / DSM 4680 / CIP 102532 / B31</strain>
    </source>
</reference>
<reference key="2">
    <citation type="journal article" date="1997" name="Nature">
        <title>Genomic sequence of a Lyme disease spirochaete, Borrelia burgdorferi.</title>
        <authorList>
            <person name="Fraser C.M."/>
            <person name="Casjens S."/>
            <person name="Huang W.M."/>
            <person name="Sutton G.G."/>
            <person name="Clayton R.A."/>
            <person name="Lathigra R."/>
            <person name="White O."/>
            <person name="Ketchum K.A."/>
            <person name="Dodson R.J."/>
            <person name="Hickey E.K."/>
            <person name="Gwinn M.L."/>
            <person name="Dougherty B.A."/>
            <person name="Tomb J.-F."/>
            <person name="Fleischmann R.D."/>
            <person name="Richardson D.L."/>
            <person name="Peterson J.D."/>
            <person name="Kerlavage A.R."/>
            <person name="Quackenbush J."/>
            <person name="Salzberg S.L."/>
            <person name="Hanson M."/>
            <person name="van Vugt R."/>
            <person name="Palmer N."/>
            <person name="Adams M.D."/>
            <person name="Gocayne J.D."/>
            <person name="Weidman J.F."/>
            <person name="Utterback T.R."/>
            <person name="Watthey L."/>
            <person name="McDonald L.A."/>
            <person name="Artiach P."/>
            <person name="Bowman C."/>
            <person name="Garland S.A."/>
            <person name="Fujii C."/>
            <person name="Cotton M.D."/>
            <person name="Horst K."/>
            <person name="Roberts K.M."/>
            <person name="Hatch B."/>
            <person name="Smith H.O."/>
            <person name="Venter J.C."/>
        </authorList>
    </citation>
    <scope>NUCLEOTIDE SEQUENCE [LARGE SCALE GENOMIC DNA]</scope>
    <source>
        <strain>ATCC 35210 / DSM 4680 / CIP 102532 / B31</strain>
    </source>
</reference>
<proteinExistence type="predicted"/>
<feature type="chain" id="PRO_0000174425" description="Uncharacterized protein BBD18">
    <location>
        <begin position="1"/>
        <end position="220"/>
    </location>
</feature>
<feature type="region of interest" description="Disordered" evidence="1">
    <location>
        <begin position="194"/>
        <end position="220"/>
    </location>
</feature>
<feature type="compositionally biased region" description="Polar residues" evidence="1">
    <location>
        <begin position="195"/>
        <end position="204"/>
    </location>
</feature>
<accession>P70842</accession>
<geneLocation type="plasmid">
    <name>lp17 (linear 17 kb)</name>
    <name>lp16</name>
</geneLocation>
<organism>
    <name type="scientific">Borreliella burgdorferi (strain ATCC 35210 / DSM 4680 / CIP 102532 / B31)</name>
    <name type="common">Borrelia burgdorferi</name>
    <dbReference type="NCBI Taxonomy" id="224326"/>
    <lineage>
        <taxon>Bacteria</taxon>
        <taxon>Pseudomonadati</taxon>
        <taxon>Spirochaetota</taxon>
        <taxon>Spirochaetia</taxon>
        <taxon>Spirochaetales</taxon>
        <taxon>Borreliaceae</taxon>
        <taxon>Borreliella</taxon>
    </lineage>
</organism>
<evidence type="ECO:0000256" key="1">
    <source>
        <dbReference type="SAM" id="MobiDB-lite"/>
    </source>
</evidence>
<dbReference type="EMBL" id="U43414">
    <property type="protein sequence ID" value="AAB38560.1"/>
    <property type="molecule type" value="Genomic_DNA"/>
</dbReference>
<dbReference type="EMBL" id="AE000793">
    <property type="protein sequence ID" value="AAC66346.1"/>
    <property type="molecule type" value="Genomic_DNA"/>
</dbReference>
<dbReference type="PIR" id="F70223">
    <property type="entry name" value="F70223"/>
</dbReference>
<dbReference type="RefSeq" id="NP_045402.1">
    <property type="nucleotide sequence ID" value="NC_001849.2"/>
</dbReference>
<dbReference type="RefSeq" id="NP_862713.1">
    <property type="nucleotide sequence ID" value="NC_004988.1"/>
</dbReference>
<dbReference type="RefSeq" id="WP_010257672.1">
    <property type="nucleotide sequence ID" value="NC_001849.2"/>
</dbReference>
<dbReference type="EnsemblBacteria" id="AAC66346">
    <property type="protein sequence ID" value="AAC66346"/>
    <property type="gene ID" value="BB_D18"/>
</dbReference>
<dbReference type="KEGG" id="bbu:BB_D18"/>
<dbReference type="PATRIC" id="fig|224326.49.peg.1260"/>
<dbReference type="HOGENOM" id="CLU_1302928_0_0_12"/>
<dbReference type="OrthoDB" id="350479at2"/>
<dbReference type="PRO" id="PR:P70842"/>
<dbReference type="Proteomes" id="UP000001807">
    <property type="component" value="Plasmid lp17"/>
</dbReference>